<reference key="1">
    <citation type="patent" date="1985-01-17" number="DE3324689">
        <title>Polypeptides, process for their preparation, and their use as hypotensive active compounds.</title>
        <authorList>
            <person name="Beress L."/>
            <person name="Doppelfeld I.-S."/>
            <person name="Etschenberg E."/>
            <person name="Graf E."/>
            <person name="Henschen-Edman A."/>
            <person name="Zwick J."/>
        </authorList>
    </citation>
    <scope>PROTEIN SEQUENCE</scope>
    <scope>FUNCTION</scope>
</reference>
<reference key="2">
    <citation type="journal article" date="1998" name="J. Biol. Chem.">
        <title>Sea anemone peptides with a specific blocking activity against the fast inactivating potassium channel Kv3.4.</title>
        <authorList>
            <person name="Diochot S."/>
            <person name="Schweitz H."/>
            <person name="Beress L."/>
            <person name="Lazdunski M."/>
        </authorList>
    </citation>
    <scope>PROTEIN SEQUENCE</scope>
    <scope>FUNCTION</scope>
</reference>
<reference key="3">
    <citation type="journal article" date="2005" name="J. Neurosci.">
        <title>Modulation of Kv3 subfamily potassium currents by the sea anemone toxin BDS: significance for CNS and biophysical studies.</title>
        <authorList>
            <person name="Yeung S.Y."/>
            <person name="Thompson D."/>
            <person name="Wang Z."/>
            <person name="Fedida D."/>
            <person name="Robertson B."/>
        </authorList>
    </citation>
    <scope>FUNCTION</scope>
</reference>
<reference key="4">
    <citation type="journal article" date="2012" name="J. Neurophysiol.">
        <title>Modulation of neuronal sodium channels by the sea anemone peptide BDS-I.</title>
        <authorList>
            <person name="Liu P."/>
            <person name="Jo S."/>
            <person name="Bean B.P."/>
        </authorList>
    </citation>
    <scope>FUNCTION ON NAV1.7/SCN9A</scope>
</reference>
<reference key="5">
    <citation type="journal article" date="2012" name="Toxicon">
        <title>Development of a rational nomenclature for naming peptide and protein toxins from sea anemones.</title>
        <authorList>
            <person name="Oliveira J.S."/>
            <person name="Fuentes-Silva D."/>
            <person name="King G.F."/>
        </authorList>
    </citation>
    <scope>NOMENCLATURE</scope>
</reference>
<reference key="6">
    <citation type="journal article" date="1989" name="Biochemistry">
        <title>A proton nuclear magnetic resonance study of the antihypertensive and antiviral protein BDS-I from the sea anemone Anemonia sulcata: sequential and stereospecific resonance assignment and secondary structure.</title>
        <authorList>
            <person name="Driscoll P.C."/>
            <person name="Clore G.M."/>
            <person name="Beress L."/>
            <person name="Gronenborn A.M."/>
        </authorList>
    </citation>
    <scope>STRUCTURE BY NMR</scope>
    <scope>DISULFIDE BONDS</scope>
</reference>
<reference key="7">
    <citation type="journal article" date="1989" name="Biochemistry">
        <title>Determination of the three-dimensional solution structure of the antihypertensive and antiviral protein BDS-I from the sea anemone Anemonia sulcata: a study using nuclear magnetic resonance and hybrid distance geometry-dynamical simulated annealing.</title>
        <authorList>
            <person name="Driscoll P.C."/>
            <person name="Gronenborn A.M."/>
            <person name="Beress L."/>
            <person name="Clore G.M."/>
        </authorList>
    </citation>
    <scope>STRUCTURE BY NMR</scope>
    <scope>DISULFIDE BONDS</scope>
</reference>
<proteinExistence type="evidence at protein level"/>
<organism>
    <name type="scientific">Anemonia sulcata</name>
    <name type="common">Mediterranean snakelocks sea anemone</name>
    <dbReference type="NCBI Taxonomy" id="6108"/>
    <lineage>
        <taxon>Eukaryota</taxon>
        <taxon>Metazoa</taxon>
        <taxon>Cnidaria</taxon>
        <taxon>Anthozoa</taxon>
        <taxon>Hexacorallia</taxon>
        <taxon>Actiniaria</taxon>
        <taxon>Actiniidae</taxon>
        <taxon>Anemonia</taxon>
    </lineage>
</organism>
<dbReference type="PIR" id="A33041">
    <property type="entry name" value="A33041"/>
</dbReference>
<dbReference type="PDB" id="1BDS">
    <property type="method" value="NMR"/>
    <property type="chains" value="A=1-43"/>
</dbReference>
<dbReference type="PDB" id="2BDS">
    <property type="method" value="NMR"/>
    <property type="chains" value="A=1-43"/>
</dbReference>
<dbReference type="PDBsum" id="1BDS"/>
<dbReference type="PDBsum" id="2BDS"/>
<dbReference type="BMRB" id="P11494"/>
<dbReference type="SMR" id="P11494"/>
<dbReference type="TCDB" id="8.B.11.1.3">
    <property type="family name" value="the sea anemone peptide toxin (apetx) family"/>
</dbReference>
<dbReference type="EvolutionaryTrace" id="P11494"/>
<dbReference type="GO" id="GO:0005576">
    <property type="term" value="C:extracellular region"/>
    <property type="evidence" value="ECO:0007669"/>
    <property type="project" value="UniProtKB-SubCell"/>
</dbReference>
<dbReference type="GO" id="GO:0042151">
    <property type="term" value="C:nematocyst"/>
    <property type="evidence" value="ECO:0007669"/>
    <property type="project" value="UniProtKB-SubCell"/>
</dbReference>
<dbReference type="GO" id="GO:0008200">
    <property type="term" value="F:ion channel inhibitor activity"/>
    <property type="evidence" value="ECO:0007669"/>
    <property type="project" value="InterPro"/>
</dbReference>
<dbReference type="GO" id="GO:0015459">
    <property type="term" value="F:potassium channel regulator activity"/>
    <property type="evidence" value="ECO:0007669"/>
    <property type="project" value="UniProtKB-KW"/>
</dbReference>
<dbReference type="GO" id="GO:0017080">
    <property type="term" value="F:sodium channel regulator activity"/>
    <property type="evidence" value="ECO:0007669"/>
    <property type="project" value="UniProtKB-KW"/>
</dbReference>
<dbReference type="GO" id="GO:0090729">
    <property type="term" value="F:toxin activity"/>
    <property type="evidence" value="ECO:0007669"/>
    <property type="project" value="UniProtKB-KW"/>
</dbReference>
<dbReference type="GO" id="GO:0008217">
    <property type="term" value="P:regulation of blood pressure"/>
    <property type="evidence" value="ECO:0007669"/>
    <property type="project" value="UniProtKB-KW"/>
</dbReference>
<dbReference type="Gene3D" id="2.20.20.10">
    <property type="entry name" value="Anthopleurin-A"/>
    <property type="match status" value="1"/>
</dbReference>
<dbReference type="InterPro" id="IPR012414">
    <property type="entry name" value="BDS_K_chnl_tox"/>
</dbReference>
<dbReference type="InterPro" id="IPR023355">
    <property type="entry name" value="Myo_ane_neurotoxin_sf"/>
</dbReference>
<dbReference type="Pfam" id="PF07936">
    <property type="entry name" value="Defensin_4"/>
    <property type="match status" value="1"/>
</dbReference>
<dbReference type="SUPFAM" id="SSF57392">
    <property type="entry name" value="Defensin-like"/>
    <property type="match status" value="1"/>
</dbReference>
<keyword id="KW-0002">3D-structure</keyword>
<keyword id="KW-0903">Direct protein sequencing</keyword>
<keyword id="KW-1015">Disulfide bond</keyword>
<keyword id="KW-0382">Hypotensive agent</keyword>
<keyword id="KW-0872">Ion channel impairing toxin</keyword>
<keyword id="KW-0166">Nematocyst</keyword>
<keyword id="KW-0528">Neurotoxin</keyword>
<keyword id="KW-0632">Potassium channel impairing toxin</keyword>
<keyword id="KW-0964">Secreted</keyword>
<keyword id="KW-0800">Toxin</keyword>
<keyword id="KW-1220">Voltage-gated potassium channel impairing toxin</keyword>
<keyword id="KW-0738">Voltage-gated sodium channel impairing toxin</keyword>
<accession>P11494</accession>
<comment type="function">
    <text evidence="1 2 4 5">Acts as a gating modifier on both Kv and Nav ion channels, and also acts on blood pressure. Voltage-dependently inhibits voltage-gated potassium channels Kv3 (Kv3.1/KCNC1, Kv3.2/KCNC2 and Kv3.4/KCNC4) and slows inactivation of the voltage-gated sodium channel Nav1.7/SCN9A (PubMed:16177043, PubMed:22442564, PubMed:9506974). Inhibits all Kv3.1, Kv3.2 and Kv3.4 by about 50% when tested at a voltage of +40 mV (45%, 48% and 56%, respectively). May act by binding residues in voltage-sensing domains S3b and S4 of Kv3 (PubMed:16177043). On sodium channel, tests have been done on human Nav1.7/SCN9A (expressed in HEK293 cells) (EC(50)=3 nM) and rat SCG neurons that mostly carry Nav1.7 channels (EC(50)=300 nM) (PubMed:22442564). This toxin also reduces blood pressure (Ref.1).</text>
</comment>
<comment type="subcellular location">
    <subcellularLocation>
        <location evidence="8">Secreted</location>
    </subcellularLocation>
    <subcellularLocation>
        <location evidence="8">Nematocyst</location>
    </subcellularLocation>
</comment>
<comment type="miscellaneous">
    <text evidence="2 4">Negative results: does not affect on Nav1.1/SCN1A and Nav1.6/SCN8A sodium channels (PubMed:22442564). It has little or no functional effect on cardiac muscle, as well as on skeletal muscle myotubes, suggesting lack of functional interaction with Nav1.4/SCN4A or Nav1.5/SCN5A (PubMed:9506974).</text>
</comment>
<comment type="miscellaneous">
    <text evidence="8">This protein sequence is identical to BDS-1 from A.viridis (AC P0DMX6).</text>
</comment>
<comment type="similarity">
    <text evidence="8">Belongs to the sea anemone type 3 (BDS) potassium channel toxin family.</text>
</comment>
<comment type="caution">
    <text evidence="8">Opinions are divided on whether Anemonia viridis (Forsskal, 1775) and Anemonia sulcata (Pennant, 1777) are separate species.</text>
</comment>
<sequence>AAPCFCSGKPGRGDLWILRGTCPGGYGYTSNCYKWPNICCYPH</sequence>
<name>BDS1_ANESU</name>
<feature type="chain" id="PRO_0000221541" description="Delta/kappa-actitoxin-Avd4a" evidence="4 5">
    <location>
        <begin position="1"/>
        <end position="43"/>
    </location>
</feature>
<feature type="disulfide bond" evidence="3">
    <location>
        <begin position="4"/>
        <end position="39"/>
    </location>
</feature>
<feature type="disulfide bond" evidence="3">
    <location>
        <begin position="6"/>
        <end position="32"/>
    </location>
</feature>
<feature type="disulfide bond" evidence="3">
    <location>
        <begin position="22"/>
        <end position="40"/>
    </location>
</feature>
<feature type="sequence variant">
    <original>L</original>
    <variation>F</variation>
    <location>
        <position position="18"/>
    </location>
</feature>
<feature type="strand" evidence="10">
    <location>
        <begin position="4"/>
        <end position="6"/>
    </location>
</feature>
<feature type="strand" evidence="9">
    <location>
        <begin position="14"/>
        <end position="16"/>
    </location>
</feature>
<feature type="strand" evidence="9">
    <location>
        <begin position="31"/>
        <end position="34"/>
    </location>
</feature>
<feature type="strand" evidence="9">
    <location>
        <begin position="37"/>
        <end position="40"/>
    </location>
</feature>
<protein>
    <recommendedName>
        <fullName evidence="6">Delta/kappa-actitoxin-Avd4a</fullName>
        <shortName evidence="6">Delta/kappa-AITX-Avd4a</shortName>
    </recommendedName>
    <alternativeName>
        <fullName>Antihypertensive protein BDS-1</fullName>
    </alternativeName>
    <alternativeName>
        <fullName evidence="7">Blood depressing substance I</fullName>
        <shortName evidence="7">BDS-I</shortName>
    </alternativeName>
</protein>
<evidence type="ECO:0000269" key="1">
    <source>
    </source>
</evidence>
<evidence type="ECO:0000269" key="2">
    <source>
    </source>
</evidence>
<evidence type="ECO:0000269" key="3">
    <source>
    </source>
</evidence>
<evidence type="ECO:0000269" key="4">
    <source>
    </source>
</evidence>
<evidence type="ECO:0000269" key="5">
    <source ref="1"/>
</evidence>
<evidence type="ECO:0000303" key="6">
    <source>
    </source>
</evidence>
<evidence type="ECO:0000303" key="7">
    <source>
    </source>
</evidence>
<evidence type="ECO:0000305" key="8"/>
<evidence type="ECO:0007829" key="9">
    <source>
        <dbReference type="PDB" id="1BDS"/>
    </source>
</evidence>
<evidence type="ECO:0007829" key="10">
    <source>
        <dbReference type="PDB" id="2BDS"/>
    </source>
</evidence>